<name>APAF_RAT</name>
<sequence>MDAKARNCLLQHKEALEKDIKTSYIMDHMISNGVLTVVEEEKVKSQATQYQRAAALIKMILNKDNYAYISFYNALLHEGYKDLAGLLHSGLPLVSSSSGKDTDGGNTSFVRTVLCEGGVPQRPVIFVTRKKLVSAIQQKLWKLNGEPGWVTIYGMAGCGKSVLAAEAVRDHALLEGCFSGGVHWVSIGKQDKSGLLMKLQNLCTRLGQEESFSQRLPLNIEEAKDRLRVLMLRKHPRSLLILDDVWDPWVLKAFDNQCQILLTTRDKSVTDSVMGPKYVIPVESGLGKEKGLEILSLFVNMKKEDLPVEAHSIIKECKGSPLVVSLVGALLRDFPNRWAYYLRQLQNKQFKRIRKSSSYDYEALDEAMSISVEMLREDIKDYYTDLSILQKDVKVPTKVLCVLWDLETEEVEDILQEFVNKSLLFCNRNGKSFCYYLHDLQVDFLTEKNRSQLQDLHRKMVTQFQRYHQPHTLSPGQEDCMYWYNFLAYHMASAGMHKELCALMFSLDWIKAKTELVGPAHLIHEFVEYRHILDEKDCAVCENFQEFLSLNGHLLGRQPFPNIVQLGLCEPETSEVYQQAKLQAKQEVDTGRLYLEWINKKTIKNLSRLVVRPHTDAVYHACFSQDGQRIASCGADKTLQVFKAETGEKLLDIKAHEDEVLCCAFSSDDSYIATCSVDKKVKIWDSGTGKLVHTYEEHSEQVNCCHFTNKSNHLLLATGSNDSFLKLWDLNQKECRNTMFGHTNSVTHCRFSPDDELLASCSADGTLKLWDVRSANEKKSINVKRFFLSSEDPPEDVEVIVKCCSWSADGDRIIVAAKNKVLLLDIHTSGLLTEIHTGHHSTIQYCDFSPYDHLAVIALSQYCVELWNIDSRVKVADCRGHLSWVHGVMFSPDGSSFLTASDDQTIRVWETRKVCKNSAIVLKQEIDVVFQENEMMVLAVDNIRGLQLIAGKTGQIDYLPEAQVSCCCLSPHLEYVAFGDEEGAIKIIELPNNRVFSSGIGHKKAVRHIQFTADGKTLISSSEDSVIQVWNWQTEEYVFLQAHQETVKDFRLLRDSRLLSWSFDGTVKVWNVITGRIERDFTCHQGTVLSCAISSDATKFSSTSADKTAKIWSFELPSPLHELKGHNSCVRCSAFSLDGILLATGDDNGEIRIWNVSDGQLLHLCAPISIEEGTATHGGWVTDVCFSPDRKMLVSAGGYLKWWNVVTGESSQTFYTNGTNLKKIHVSPDFRTYVTVDNLGILYILQVLE</sequence>
<comment type="function">
    <text evidence="1">Regulates programmed cell death; necessary for normal brain development. Participates with pro-caspase-9 (Apaf-3) in the cytochrome c-dependent activation of caspase-3, leading to apoptosis. This activation requires ATP (By similarity).</text>
</comment>
<comment type="subunit">
    <text evidence="2">Monomer. Oligomerizes to a heptameric ring, known as the apoptosome, upon binding of cytochrome c and dATP. Oligomeric Apaf-1 and pro-caspase-9 bind to each other via their respective NH2-terminal CARD domains. Interacts with UACA. Interacts with APIP (By similarity). Interacts (via CARD and NACHT domains) with NAIP/BIRC1 (via NACHT domain) (By similarity). Interacts with CIAO2A (By similarity).</text>
</comment>
<comment type="interaction">
    <interactant intactId="EBI-6978501">
        <id>Q9EPV5</id>
    </interactant>
    <interactant intactId="EBI-473886">
        <id>O00291</id>
        <label>HIP1</label>
    </interactant>
    <organismsDiffer>true</organismsDiffer>
    <experiments>2</experiments>
</comment>
<comment type="subcellular location">
    <subcellularLocation>
        <location evidence="1">Cytoplasm</location>
    </subcellularLocation>
</comment>
<comment type="developmental stage">
    <text evidence="5">Highly expressed in brain cortex in embryos (17 dpc) and newborn rats up to P7. Very low expression thereafter.</text>
</comment>
<comment type="induction">
    <text evidence="5">By brain injury.</text>
</comment>
<comment type="domain">
    <text>The CARD domain mediates interaction with APIP.</text>
</comment>
<comment type="domain">
    <text evidence="1">The monomeric form is autoinhibited in a closed conformation through a bound ADP at the nucleotide binding site. Exchange of ADP for ATP and binding of cytochrome c trigger a large conformational change where the first WD repeat region swings out, allowing the NB-ARC domain to rotate and expose the contact areas for oligomerization (By similarity).</text>
</comment>
<comment type="miscellaneous">
    <text evidence="1">Physiological concentrations of calcium ions negatively affect the assembly of apoptosome by inhibiting nucleotide exchange in the monomeric form.</text>
</comment>
<protein>
    <recommendedName>
        <fullName>Apoptotic protease-activating factor 1</fullName>
        <shortName>APAF-1</shortName>
    </recommendedName>
</protein>
<dbReference type="EMBL" id="AF320222">
    <property type="protein sequence ID" value="AAG35067.1"/>
    <property type="molecule type" value="mRNA"/>
</dbReference>
<dbReference type="RefSeq" id="NP_076469.1">
    <property type="nucleotide sequence ID" value="NM_023979.2"/>
</dbReference>
<dbReference type="SMR" id="Q9EPV5"/>
<dbReference type="FunCoup" id="Q9EPV5">
    <property type="interactions" value="3060"/>
</dbReference>
<dbReference type="IntAct" id="Q9EPV5">
    <property type="interactions" value="2"/>
</dbReference>
<dbReference type="MINT" id="Q9EPV5"/>
<dbReference type="STRING" id="10116.ENSRNOP00000010869"/>
<dbReference type="iPTMnet" id="Q9EPV5"/>
<dbReference type="PhosphoSitePlus" id="Q9EPV5"/>
<dbReference type="jPOST" id="Q9EPV5"/>
<dbReference type="PaxDb" id="10116-ENSRNOP00000010869"/>
<dbReference type="Ensembl" id="ENSRNOT00000010869.7">
    <property type="protein sequence ID" value="ENSRNOP00000010869.6"/>
    <property type="gene ID" value="ENSRNOG00000008022.7"/>
</dbReference>
<dbReference type="GeneID" id="78963"/>
<dbReference type="KEGG" id="rno:78963"/>
<dbReference type="UCSC" id="RGD:620575">
    <property type="organism name" value="rat"/>
</dbReference>
<dbReference type="AGR" id="RGD:620575"/>
<dbReference type="CTD" id="317"/>
<dbReference type="RGD" id="620575">
    <property type="gene designation" value="Apaf1"/>
</dbReference>
<dbReference type="eggNOG" id="KOG4155">
    <property type="taxonomic scope" value="Eukaryota"/>
</dbReference>
<dbReference type="eggNOG" id="KOG4658">
    <property type="taxonomic scope" value="Eukaryota"/>
</dbReference>
<dbReference type="GeneTree" id="ENSGT00940000157710"/>
<dbReference type="HOGENOM" id="CLU_005071_1_0_1"/>
<dbReference type="InParanoid" id="Q9EPV5"/>
<dbReference type="OMA" id="GAYLKWW"/>
<dbReference type="OrthoDB" id="1357022at2759"/>
<dbReference type="PhylomeDB" id="Q9EPV5"/>
<dbReference type="Reactome" id="R-RNO-111458">
    <property type="pathway name" value="Formation of apoptosome"/>
</dbReference>
<dbReference type="Reactome" id="R-RNO-111459">
    <property type="pathway name" value="Activation of caspases through apoptosome-mediated cleavage"/>
</dbReference>
<dbReference type="Reactome" id="R-RNO-6798695">
    <property type="pathway name" value="Neutrophil degranulation"/>
</dbReference>
<dbReference type="Reactome" id="R-RNO-9627069">
    <property type="pathway name" value="Regulation of the apoptosome activity"/>
</dbReference>
<dbReference type="PRO" id="PR:Q9EPV5"/>
<dbReference type="Proteomes" id="UP000002494">
    <property type="component" value="Chromosome 7"/>
</dbReference>
<dbReference type="Bgee" id="ENSRNOG00000008022">
    <property type="expression patterns" value="Expressed in jejunum and 19 other cell types or tissues"/>
</dbReference>
<dbReference type="GO" id="GO:0043293">
    <property type="term" value="C:apoptosome"/>
    <property type="evidence" value="ECO:0000314"/>
    <property type="project" value="BHF-UCL"/>
</dbReference>
<dbReference type="GO" id="GO:0005737">
    <property type="term" value="C:cytoplasm"/>
    <property type="evidence" value="ECO:0000314"/>
    <property type="project" value="RGD"/>
</dbReference>
<dbReference type="GO" id="GO:0005829">
    <property type="term" value="C:cytosol"/>
    <property type="evidence" value="ECO:0000266"/>
    <property type="project" value="RGD"/>
</dbReference>
<dbReference type="GO" id="GO:0005634">
    <property type="term" value="C:nucleus"/>
    <property type="evidence" value="ECO:0000266"/>
    <property type="project" value="RGD"/>
</dbReference>
<dbReference type="GO" id="GO:0032991">
    <property type="term" value="C:protein-containing complex"/>
    <property type="evidence" value="ECO:0000266"/>
    <property type="project" value="RGD"/>
</dbReference>
<dbReference type="GO" id="GO:0043531">
    <property type="term" value="F:ADP binding"/>
    <property type="evidence" value="ECO:0007669"/>
    <property type="project" value="InterPro"/>
</dbReference>
<dbReference type="GO" id="GO:0005524">
    <property type="term" value="F:ATP binding"/>
    <property type="evidence" value="ECO:0007669"/>
    <property type="project" value="UniProtKB-KW"/>
</dbReference>
<dbReference type="GO" id="GO:0008656">
    <property type="term" value="F:cysteine-type endopeptidase activator activity involved in apoptotic process"/>
    <property type="evidence" value="ECO:0000266"/>
    <property type="project" value="RGD"/>
</dbReference>
<dbReference type="GO" id="GO:0031072">
    <property type="term" value="F:heat shock protein binding"/>
    <property type="evidence" value="ECO:0000353"/>
    <property type="project" value="RGD"/>
</dbReference>
<dbReference type="GO" id="GO:0042802">
    <property type="term" value="F:identical protein binding"/>
    <property type="evidence" value="ECO:0000353"/>
    <property type="project" value="RGD"/>
</dbReference>
<dbReference type="GO" id="GO:0007420">
    <property type="term" value="P:brain development"/>
    <property type="evidence" value="ECO:0000266"/>
    <property type="project" value="RGD"/>
</dbReference>
<dbReference type="GO" id="GO:0010659">
    <property type="term" value="P:cardiac muscle cell apoptotic process"/>
    <property type="evidence" value="ECO:0000315"/>
    <property type="project" value="RGD"/>
</dbReference>
<dbReference type="GO" id="GO:0030154">
    <property type="term" value="P:cell differentiation"/>
    <property type="evidence" value="ECO:0000270"/>
    <property type="project" value="RGD"/>
</dbReference>
<dbReference type="GO" id="GO:0071560">
    <property type="term" value="P:cellular response to transforming growth factor beta stimulus"/>
    <property type="evidence" value="ECO:0000314"/>
    <property type="project" value="RGD"/>
</dbReference>
<dbReference type="GO" id="GO:0030900">
    <property type="term" value="P:forebrain development"/>
    <property type="evidence" value="ECO:0000266"/>
    <property type="project" value="RGD"/>
</dbReference>
<dbReference type="GO" id="GO:0070059">
    <property type="term" value="P:intrinsic apoptotic signaling pathway in response to endoplasmic reticulum stress"/>
    <property type="evidence" value="ECO:0000266"/>
    <property type="project" value="RGD"/>
</dbReference>
<dbReference type="GO" id="GO:0001822">
    <property type="term" value="P:kidney development"/>
    <property type="evidence" value="ECO:0000270"/>
    <property type="project" value="RGD"/>
</dbReference>
<dbReference type="GO" id="GO:0001843">
    <property type="term" value="P:neural tube closure"/>
    <property type="evidence" value="ECO:0000266"/>
    <property type="project" value="RGD"/>
</dbReference>
<dbReference type="GO" id="GO:0051402">
    <property type="term" value="P:neuron apoptotic process"/>
    <property type="evidence" value="ECO:0000266"/>
    <property type="project" value="RGD"/>
</dbReference>
<dbReference type="GO" id="GO:0043065">
    <property type="term" value="P:positive regulation of apoptotic process"/>
    <property type="evidence" value="ECO:0000266"/>
    <property type="project" value="RGD"/>
</dbReference>
<dbReference type="GO" id="GO:2001235">
    <property type="term" value="P:positive regulation of apoptotic signaling pathway"/>
    <property type="evidence" value="ECO:0000266"/>
    <property type="project" value="RGD"/>
</dbReference>
<dbReference type="GO" id="GO:1902510">
    <property type="term" value="P:regulation of apoptotic DNA fragmentation"/>
    <property type="evidence" value="ECO:0000266"/>
    <property type="project" value="RGD"/>
</dbReference>
<dbReference type="GO" id="GO:0001666">
    <property type="term" value="P:response to hypoxia"/>
    <property type="evidence" value="ECO:0000270"/>
    <property type="project" value="RGD"/>
</dbReference>
<dbReference type="GO" id="GO:0007584">
    <property type="term" value="P:response to nutrient"/>
    <property type="evidence" value="ECO:0000270"/>
    <property type="project" value="RGD"/>
</dbReference>
<dbReference type="CDD" id="cd08323">
    <property type="entry name" value="CARD_APAF1"/>
    <property type="match status" value="1"/>
</dbReference>
<dbReference type="CDD" id="cd00200">
    <property type="entry name" value="WD40"/>
    <property type="match status" value="2"/>
</dbReference>
<dbReference type="FunFam" id="1.10.10.10:FF:000204">
    <property type="entry name" value="Apoptotic protease-activating factor 1"/>
    <property type="match status" value="1"/>
</dbReference>
<dbReference type="FunFam" id="1.10.533.10:FF:000014">
    <property type="entry name" value="Apoptotic protease-activating factor 1"/>
    <property type="match status" value="1"/>
</dbReference>
<dbReference type="FunFam" id="1.10.8.430:FF:000001">
    <property type="entry name" value="Apoptotic protease-activating factor 1"/>
    <property type="match status" value="1"/>
</dbReference>
<dbReference type="FunFam" id="1.25.40.370:FF:000001">
    <property type="entry name" value="Apoptotic protease-activating factor 1"/>
    <property type="match status" value="1"/>
</dbReference>
<dbReference type="FunFam" id="2.130.10.10:FF:000135">
    <property type="entry name" value="Apoptotic protease-activating factor 1"/>
    <property type="match status" value="1"/>
</dbReference>
<dbReference type="FunFam" id="2.130.10.10:FF:000196">
    <property type="entry name" value="Apoptotic protease-activating factor 1"/>
    <property type="match status" value="1"/>
</dbReference>
<dbReference type="FunFam" id="3.40.50.300:FF:000502">
    <property type="entry name" value="Apoptotic protease-activating factor 1"/>
    <property type="match status" value="1"/>
</dbReference>
<dbReference type="Gene3D" id="1.25.40.370">
    <property type="match status" value="1"/>
</dbReference>
<dbReference type="Gene3D" id="1.10.533.10">
    <property type="entry name" value="Death Domain, Fas"/>
    <property type="match status" value="1"/>
</dbReference>
<dbReference type="Gene3D" id="1.10.8.430">
    <property type="entry name" value="Helical domain of apoptotic protease-activating factors"/>
    <property type="match status" value="1"/>
</dbReference>
<dbReference type="Gene3D" id="3.40.50.300">
    <property type="entry name" value="P-loop containing nucleotide triphosphate hydrolases"/>
    <property type="match status" value="1"/>
</dbReference>
<dbReference type="Gene3D" id="1.10.10.10">
    <property type="entry name" value="Winged helix-like DNA-binding domain superfamily/Winged helix DNA-binding domain"/>
    <property type="match status" value="1"/>
</dbReference>
<dbReference type="Gene3D" id="2.130.10.10">
    <property type="entry name" value="YVTN repeat-like/Quinoprotein amine dehydrogenase"/>
    <property type="match status" value="2"/>
</dbReference>
<dbReference type="InterPro" id="IPR017251">
    <property type="entry name" value="Apaf-1"/>
</dbReference>
<dbReference type="InterPro" id="IPR041452">
    <property type="entry name" value="APAF1_C"/>
</dbReference>
<dbReference type="InterPro" id="IPR037963">
    <property type="entry name" value="APAF1_CARD_dom"/>
</dbReference>
<dbReference type="InterPro" id="IPR048975">
    <property type="entry name" value="APAF1_WHD"/>
</dbReference>
<dbReference type="InterPro" id="IPR042197">
    <property type="entry name" value="Apaf_helical"/>
</dbReference>
<dbReference type="InterPro" id="IPR001315">
    <property type="entry name" value="CARD"/>
</dbReference>
<dbReference type="InterPro" id="IPR011029">
    <property type="entry name" value="DEATH-like_dom_sf"/>
</dbReference>
<dbReference type="InterPro" id="IPR020472">
    <property type="entry name" value="G-protein_beta_WD-40_rep"/>
</dbReference>
<dbReference type="InterPro" id="IPR002182">
    <property type="entry name" value="NB-ARC"/>
</dbReference>
<dbReference type="InterPro" id="IPR027417">
    <property type="entry name" value="P-loop_NTPase"/>
</dbReference>
<dbReference type="InterPro" id="IPR015943">
    <property type="entry name" value="WD40/YVTN_repeat-like_dom_sf"/>
</dbReference>
<dbReference type="InterPro" id="IPR019775">
    <property type="entry name" value="WD40_repeat_CS"/>
</dbReference>
<dbReference type="InterPro" id="IPR036322">
    <property type="entry name" value="WD40_repeat_dom_sf"/>
</dbReference>
<dbReference type="InterPro" id="IPR001680">
    <property type="entry name" value="WD40_rpt"/>
</dbReference>
<dbReference type="InterPro" id="IPR036388">
    <property type="entry name" value="WH-like_DNA-bd_sf"/>
</dbReference>
<dbReference type="PANTHER" id="PTHR22845">
    <property type="entry name" value="APOPTOTIC PROTEASE-ACTIVATING FACTOR 1"/>
    <property type="match status" value="1"/>
</dbReference>
<dbReference type="PANTHER" id="PTHR22845:SF5">
    <property type="entry name" value="APOPTOTIC PROTEASE-ACTIVATING FACTOR 1"/>
    <property type="match status" value="1"/>
</dbReference>
<dbReference type="Pfam" id="PF21296">
    <property type="entry name" value="APAF-1-like_WHD"/>
    <property type="match status" value="1"/>
</dbReference>
<dbReference type="Pfam" id="PF17908">
    <property type="entry name" value="APAF1_C"/>
    <property type="match status" value="1"/>
</dbReference>
<dbReference type="Pfam" id="PF00619">
    <property type="entry name" value="CARD"/>
    <property type="match status" value="1"/>
</dbReference>
<dbReference type="Pfam" id="PF00931">
    <property type="entry name" value="NB-ARC"/>
    <property type="match status" value="1"/>
</dbReference>
<dbReference type="Pfam" id="PF00400">
    <property type="entry name" value="WD40"/>
    <property type="match status" value="10"/>
</dbReference>
<dbReference type="PIRSF" id="PIRSF037646">
    <property type="entry name" value="Apop_pept_activating-1"/>
    <property type="match status" value="1"/>
</dbReference>
<dbReference type="PRINTS" id="PR00364">
    <property type="entry name" value="DISEASERSIST"/>
</dbReference>
<dbReference type="PRINTS" id="PR00320">
    <property type="entry name" value="GPROTEINBRPT"/>
</dbReference>
<dbReference type="SMART" id="SM00320">
    <property type="entry name" value="WD40"/>
    <property type="match status" value="13"/>
</dbReference>
<dbReference type="SUPFAM" id="SSF47986">
    <property type="entry name" value="DEATH domain"/>
    <property type="match status" value="1"/>
</dbReference>
<dbReference type="SUPFAM" id="SSF52540">
    <property type="entry name" value="P-loop containing nucleoside triphosphate hydrolases"/>
    <property type="match status" value="1"/>
</dbReference>
<dbReference type="SUPFAM" id="SSF50978">
    <property type="entry name" value="WD40 repeat-like"/>
    <property type="match status" value="2"/>
</dbReference>
<dbReference type="PROSITE" id="PS50209">
    <property type="entry name" value="CARD"/>
    <property type="match status" value="1"/>
</dbReference>
<dbReference type="PROSITE" id="PS00678">
    <property type="entry name" value="WD_REPEATS_1"/>
    <property type="match status" value="4"/>
</dbReference>
<dbReference type="PROSITE" id="PS50082">
    <property type="entry name" value="WD_REPEATS_2"/>
    <property type="match status" value="9"/>
</dbReference>
<dbReference type="PROSITE" id="PS50294">
    <property type="entry name" value="WD_REPEATS_REGION"/>
    <property type="match status" value="1"/>
</dbReference>
<reference key="1">
    <citation type="submission" date="2000-11" db="EMBL/GenBank/DDBJ databases">
        <authorList>
            <person name="Itoh T."/>
            <person name="Itoh A."/>
            <person name="Pleasure D."/>
        </authorList>
    </citation>
    <scope>NUCLEOTIDE SEQUENCE [MRNA]</scope>
    <source>
        <strain>Sprague-Dawley</strain>
    </source>
</reference>
<reference key="2">
    <citation type="journal article" date="2001" name="J. Neurosci.">
        <title>Differential expression of apoptotic protease-activating factor-1 and caspase-3 genes and susceptibility to apoptosis during brain development and after traumatic brain injury.</title>
        <authorList>
            <person name="Yakovlev A.G."/>
            <person name="Ota K."/>
            <person name="Wang G."/>
            <person name="Movsesyan V."/>
            <person name="Bao W.-L."/>
            <person name="Yoshihara K."/>
            <person name="Faden A.I."/>
        </authorList>
    </citation>
    <scope>DEVELOPMENTAL STAGE</scope>
    <scope>INDUCTION BY BRAIN INJURY</scope>
</reference>
<organism>
    <name type="scientific">Rattus norvegicus</name>
    <name type="common">Rat</name>
    <dbReference type="NCBI Taxonomy" id="10116"/>
    <lineage>
        <taxon>Eukaryota</taxon>
        <taxon>Metazoa</taxon>
        <taxon>Chordata</taxon>
        <taxon>Craniata</taxon>
        <taxon>Vertebrata</taxon>
        <taxon>Euteleostomi</taxon>
        <taxon>Mammalia</taxon>
        <taxon>Eutheria</taxon>
        <taxon>Euarchontoglires</taxon>
        <taxon>Glires</taxon>
        <taxon>Rodentia</taxon>
        <taxon>Myomorpha</taxon>
        <taxon>Muroidea</taxon>
        <taxon>Muridae</taxon>
        <taxon>Murinae</taxon>
        <taxon>Rattus</taxon>
    </lineage>
</organism>
<keyword id="KW-0053">Apoptosis</keyword>
<keyword id="KW-0067">ATP-binding</keyword>
<keyword id="KW-0106">Calcium</keyword>
<keyword id="KW-0963">Cytoplasm</keyword>
<keyword id="KW-0547">Nucleotide-binding</keyword>
<keyword id="KW-1185">Reference proteome</keyword>
<keyword id="KW-0677">Repeat</keyword>
<keyword id="KW-0853">WD repeat</keyword>
<accession>Q9EPV5</accession>
<proteinExistence type="evidence at protein level"/>
<feature type="chain" id="PRO_0000050846" description="Apoptotic protease-activating factor 1">
    <location>
        <begin position="1"/>
        <end position="1249"/>
    </location>
</feature>
<feature type="domain" description="CARD" evidence="4">
    <location>
        <begin position="1"/>
        <end position="90"/>
    </location>
</feature>
<feature type="domain" description="NB-ARC">
    <location>
        <begin position="106"/>
        <end position="415"/>
    </location>
</feature>
<feature type="repeat" description="WD 1-1">
    <location>
        <begin position="613"/>
        <end position="652"/>
    </location>
</feature>
<feature type="repeat" description="WD 1-2">
    <location>
        <begin position="655"/>
        <end position="694"/>
    </location>
</feature>
<feature type="repeat" description="WD 1-3">
    <location>
        <begin position="697"/>
        <end position="738"/>
    </location>
</feature>
<feature type="repeat" description="WD 1-4">
    <location>
        <begin position="741"/>
        <end position="780"/>
    </location>
</feature>
<feature type="repeat" description="WD 1-5">
    <location>
        <begin position="796"/>
        <end position="837"/>
    </location>
</feature>
<feature type="repeat" description="WD 1-6">
    <location>
        <begin position="838"/>
        <end position="877"/>
    </location>
</feature>
<feature type="repeat" description="WD 1-7">
    <location>
        <begin position="880"/>
        <end position="910"/>
    </location>
</feature>
<feature type="repeat" description="WD 2-1">
    <location>
        <begin position="922"/>
        <end position="958"/>
    </location>
</feature>
<feature type="repeat" description="WD 2-2">
    <location>
        <begin position="959"/>
        <end position="998"/>
    </location>
</feature>
<feature type="repeat" description="WD 2-3">
    <location>
        <begin position="1001"/>
        <end position="1040"/>
    </location>
</feature>
<feature type="repeat" description="WD 2-4">
    <location>
        <begin position="1042"/>
        <end position="1080"/>
    </location>
</feature>
<feature type="repeat" description="WD 2-5">
    <location>
        <begin position="1083"/>
        <end position="1122"/>
    </location>
</feature>
<feature type="repeat" description="WD 2-6">
    <location>
        <begin position="1125"/>
        <end position="1164"/>
    </location>
</feature>
<feature type="repeat" description="WD 2-7">
    <location>
        <begin position="1176"/>
        <end position="1213"/>
    </location>
</feature>
<feature type="repeat" description="WD 2-8">
    <location>
        <begin position="1214"/>
        <end position="1249"/>
    </location>
</feature>
<feature type="region of interest" description="Interpropeller linker" evidence="1">
    <location>
        <begin position="910"/>
        <end position="921"/>
    </location>
</feature>
<feature type="binding site" evidence="3">
    <location>
        <begin position="154"/>
        <end position="161"/>
    </location>
    <ligand>
        <name>ATP</name>
        <dbReference type="ChEBI" id="CHEBI:30616"/>
    </ligand>
</feature>
<feature type="binding site" evidence="1">
    <location>
        <position position="265"/>
    </location>
    <ligand>
        <name>ATP</name>
        <dbReference type="ChEBI" id="CHEBI:30616"/>
    </ligand>
</feature>
<evidence type="ECO:0000250" key="1"/>
<evidence type="ECO:0000250" key="2">
    <source>
        <dbReference type="UniProtKB" id="O14727"/>
    </source>
</evidence>
<evidence type="ECO:0000255" key="3"/>
<evidence type="ECO:0000255" key="4">
    <source>
        <dbReference type="PROSITE-ProRule" id="PRU00046"/>
    </source>
</evidence>
<evidence type="ECO:0000269" key="5">
    <source>
    </source>
</evidence>
<gene>
    <name type="primary">Apaf1</name>
</gene>